<evidence type="ECO:0000256" key="1">
    <source>
        <dbReference type="SAM" id="MobiDB-lite"/>
    </source>
</evidence>
<evidence type="ECO:0000303" key="2">
    <source>
    </source>
</evidence>
<evidence type="ECO:0000305" key="3"/>
<evidence type="ECO:0007744" key="4">
    <source>
    </source>
</evidence>
<comment type="alternative products">
    <event type="alternative splicing"/>
    <isoform>
        <id>F5H4B4-1</id>
        <name>1</name>
        <sequence type="displayed"/>
    </isoform>
    <isoform>
        <id>F5H4B4-2</id>
        <name>2</name>
        <sequence type="described" ref="VSP_044139 VSP_044140"/>
    </isoform>
</comment>
<comment type="similarity">
    <text evidence="3">Belongs to the FAM227 family.</text>
</comment>
<protein>
    <recommendedName>
        <fullName>Protein FAM227A</fullName>
    </recommendedName>
</protein>
<dbReference type="EMBL" id="AK301819">
    <property type="protein sequence ID" value="BAH13562.1"/>
    <property type="molecule type" value="mRNA"/>
</dbReference>
<dbReference type="EMBL" id="AL021707">
    <property type="status" value="NOT_ANNOTATED_CDS"/>
    <property type="molecule type" value="Genomic_DNA"/>
</dbReference>
<dbReference type="EMBL" id="AL022320">
    <property type="status" value="NOT_ANNOTATED_CDS"/>
    <property type="molecule type" value="Genomic_DNA"/>
</dbReference>
<dbReference type="EMBL" id="AL035495">
    <property type="status" value="NOT_ANNOTATED_CDS"/>
    <property type="molecule type" value="Genomic_DNA"/>
</dbReference>
<dbReference type="CCDS" id="CCDS93164.1">
    <molecule id="F5H4B4-1"/>
</dbReference>
<dbReference type="RefSeq" id="NP_001013669.1">
    <molecule id="F5H4B4-1"/>
    <property type="nucleotide sequence ID" value="NM_001013647.2"/>
</dbReference>
<dbReference type="RefSeq" id="NP_001277959.1">
    <molecule id="F5H4B4-2"/>
    <property type="nucleotide sequence ID" value="NM_001291030.2"/>
</dbReference>
<dbReference type="SMR" id="F5H4B4"/>
<dbReference type="BioGRID" id="571665">
    <property type="interactions" value="1"/>
</dbReference>
<dbReference type="FunCoup" id="F5H4B4">
    <property type="interactions" value="57"/>
</dbReference>
<dbReference type="IntAct" id="F5H4B4">
    <property type="interactions" value="1"/>
</dbReference>
<dbReference type="STRING" id="9606.ENSP00000348086"/>
<dbReference type="GlyGen" id="F5H4B4">
    <property type="glycosylation" value="1 site, 1 O-linked glycan (1 site)"/>
</dbReference>
<dbReference type="iPTMnet" id="F5H4B4"/>
<dbReference type="PhosphoSitePlus" id="F5H4B4"/>
<dbReference type="BioMuta" id="FAM227A"/>
<dbReference type="DMDM" id="212288106"/>
<dbReference type="MassIVE" id="F5H4B4"/>
<dbReference type="PaxDb" id="9606-ENSP00000348086"/>
<dbReference type="PeptideAtlas" id="F5H4B4"/>
<dbReference type="Antibodypedia" id="312">
    <property type="antibodies" value="8 antibodies from 7 providers"/>
</dbReference>
<dbReference type="DNASU" id="646851"/>
<dbReference type="Ensembl" id="ENST00000535113.7">
    <molecule id="F5H4B4-1"/>
    <property type="protein sequence ID" value="ENSP00000445093.1"/>
    <property type="gene ID" value="ENSG00000184949.18"/>
</dbReference>
<dbReference type="GeneID" id="646851"/>
<dbReference type="KEGG" id="hsa:646851"/>
<dbReference type="MANE-Select" id="ENST00000535113.7">
    <property type="protein sequence ID" value="ENSP00000445093.1"/>
    <property type="RefSeq nucleotide sequence ID" value="NM_001013647.2"/>
    <property type="RefSeq protein sequence ID" value="NP_001013669.1"/>
</dbReference>
<dbReference type="UCSC" id="uc062ege.1">
    <molecule id="F5H4B4-1"/>
    <property type="organism name" value="human"/>
</dbReference>
<dbReference type="AGR" id="HGNC:44197"/>
<dbReference type="CTD" id="646851"/>
<dbReference type="DisGeNET" id="646851"/>
<dbReference type="GeneCards" id="FAM227A"/>
<dbReference type="HGNC" id="HGNC:44197">
    <property type="gene designation" value="FAM227A"/>
</dbReference>
<dbReference type="HPA" id="ENSG00000184949">
    <property type="expression patterns" value="Tissue enhanced (choroid)"/>
</dbReference>
<dbReference type="neXtProt" id="NX_F5H4B4"/>
<dbReference type="OpenTargets" id="ENSG00000184949"/>
<dbReference type="VEuPathDB" id="HostDB:ENSG00000184949"/>
<dbReference type="eggNOG" id="ENOG502QR30">
    <property type="taxonomic scope" value="Eukaryota"/>
</dbReference>
<dbReference type="GeneTree" id="ENSGT00940000162433"/>
<dbReference type="InParanoid" id="F5H4B4"/>
<dbReference type="OrthoDB" id="192208at2759"/>
<dbReference type="PAN-GO" id="F5H4B4">
    <property type="GO annotations" value="0 GO annotations based on evolutionary models"/>
</dbReference>
<dbReference type="PathwayCommons" id="F5H4B4"/>
<dbReference type="SignaLink" id="F5H4B4"/>
<dbReference type="BioGRID-ORCS" id="646851">
    <property type="hits" value="5 hits in 352 CRISPR screens"/>
</dbReference>
<dbReference type="ChiTaRS" id="FAM227A">
    <property type="organism name" value="human"/>
</dbReference>
<dbReference type="GenomeRNAi" id="646851"/>
<dbReference type="Pharos" id="F5H4B4">
    <property type="development level" value="Tdark"/>
</dbReference>
<dbReference type="PRO" id="PR:F5H4B4"/>
<dbReference type="Proteomes" id="UP000005640">
    <property type="component" value="Chromosome 22"/>
</dbReference>
<dbReference type="RNAct" id="F5H4B4">
    <property type="molecule type" value="protein"/>
</dbReference>
<dbReference type="Bgee" id="ENSG00000184949">
    <property type="expression patterns" value="Expressed in right uterine tube and 100 other cell types or tissues"/>
</dbReference>
<dbReference type="ExpressionAtlas" id="F5H4B4">
    <property type="expression patterns" value="baseline and differential"/>
</dbReference>
<dbReference type="InterPro" id="IPR029417">
    <property type="entry name" value="FAM227"/>
</dbReference>
<dbReference type="PANTHER" id="PTHR33560:SF1">
    <property type="entry name" value="PROTEIN FAM227A"/>
    <property type="match status" value="1"/>
</dbReference>
<dbReference type="PANTHER" id="PTHR33560">
    <property type="entry name" value="PROTEIN FAM227B"/>
    <property type="match status" value="1"/>
</dbReference>
<dbReference type="Pfam" id="PF14922">
    <property type="entry name" value="FWWh"/>
    <property type="match status" value="1"/>
</dbReference>
<sequence>MNHFRKMEVINLTTLPMIPVDEHLAVSLVARNTMVKTVRKELENNPPSCLIGSMHQVNQKIADINLRTEPSANSLAIERFELEKKALREKTRSSPEDKVKRQRKSQYSCKGSELRHARSSVIKRKTADKNLLAELYQYSNFNSSKPNKLPNGVDFCDMVGNVVRAERDCLSGKHFCSGRELEKFLSSSSPRAIWLDSFWWIFHERYQPNKELQNNLFDRIAQHYALLLFRVPKSHSEEALLKRLPSLLSKAVYTSFCCCFPQSWFDTHEFKSDICNTMSLWISGTYPSPQSYDSWDYSELDPERFRREELMLYRRRLTKGREFSLFAGKRAFSQKPAQSRKFYHPQSSSANSPSEKTSSAKQNSEKSLRMQNTAKEHHCQTLVLKKPTQEVKRISEARECENMFPKKSCAACKSPELTSNLFNIYGKSPLIVYFLQNYASLQQHGKNVLIVRREKTTSTPDCTPTYTDVISETLCSMKKRKDNLNQLYQHHWTEWNYFDKHLKELQDNFSREMKNIDPKAADTKKANHMFIPPSAVNEESPDKKTKEGKGGEGKRRETEVEHFFPLTSKP</sequence>
<proteinExistence type="evidence at protein level"/>
<organism>
    <name type="scientific">Homo sapiens</name>
    <name type="common">Human</name>
    <dbReference type="NCBI Taxonomy" id="9606"/>
    <lineage>
        <taxon>Eukaryota</taxon>
        <taxon>Metazoa</taxon>
        <taxon>Chordata</taxon>
        <taxon>Craniata</taxon>
        <taxon>Vertebrata</taxon>
        <taxon>Euteleostomi</taxon>
        <taxon>Mammalia</taxon>
        <taxon>Eutheria</taxon>
        <taxon>Euarchontoglires</taxon>
        <taxon>Primates</taxon>
        <taxon>Haplorrhini</taxon>
        <taxon>Catarrhini</taxon>
        <taxon>Hominidae</taxon>
        <taxon>Homo</taxon>
    </lineage>
</organism>
<name>F227A_HUMAN</name>
<gene>
    <name type="primary">FAM227A</name>
</gene>
<reference key="1">
    <citation type="journal article" date="2004" name="Nat. Genet.">
        <title>Complete sequencing and characterization of 21,243 full-length human cDNAs.</title>
        <authorList>
            <person name="Ota T."/>
            <person name="Suzuki Y."/>
            <person name="Nishikawa T."/>
            <person name="Otsuki T."/>
            <person name="Sugiyama T."/>
            <person name="Irie R."/>
            <person name="Wakamatsu A."/>
            <person name="Hayashi K."/>
            <person name="Sato H."/>
            <person name="Nagai K."/>
            <person name="Kimura K."/>
            <person name="Makita H."/>
            <person name="Sekine M."/>
            <person name="Obayashi M."/>
            <person name="Nishi T."/>
            <person name="Shibahara T."/>
            <person name="Tanaka T."/>
            <person name="Ishii S."/>
            <person name="Yamamoto J."/>
            <person name="Saito K."/>
            <person name="Kawai Y."/>
            <person name="Isono Y."/>
            <person name="Nakamura Y."/>
            <person name="Nagahari K."/>
            <person name="Murakami K."/>
            <person name="Yasuda T."/>
            <person name="Iwayanagi T."/>
            <person name="Wagatsuma M."/>
            <person name="Shiratori A."/>
            <person name="Sudo H."/>
            <person name="Hosoiri T."/>
            <person name="Kaku Y."/>
            <person name="Kodaira H."/>
            <person name="Kondo H."/>
            <person name="Sugawara M."/>
            <person name="Takahashi M."/>
            <person name="Kanda K."/>
            <person name="Yokoi T."/>
            <person name="Furuya T."/>
            <person name="Kikkawa E."/>
            <person name="Omura Y."/>
            <person name="Abe K."/>
            <person name="Kamihara K."/>
            <person name="Katsuta N."/>
            <person name="Sato K."/>
            <person name="Tanikawa M."/>
            <person name="Yamazaki M."/>
            <person name="Ninomiya K."/>
            <person name="Ishibashi T."/>
            <person name="Yamashita H."/>
            <person name="Murakawa K."/>
            <person name="Fujimori K."/>
            <person name="Tanai H."/>
            <person name="Kimata M."/>
            <person name="Watanabe M."/>
            <person name="Hiraoka S."/>
            <person name="Chiba Y."/>
            <person name="Ishida S."/>
            <person name="Ono Y."/>
            <person name="Takiguchi S."/>
            <person name="Watanabe S."/>
            <person name="Yosida M."/>
            <person name="Hotuta T."/>
            <person name="Kusano J."/>
            <person name="Kanehori K."/>
            <person name="Takahashi-Fujii A."/>
            <person name="Hara H."/>
            <person name="Tanase T.-O."/>
            <person name="Nomura Y."/>
            <person name="Togiya S."/>
            <person name="Komai F."/>
            <person name="Hara R."/>
            <person name="Takeuchi K."/>
            <person name="Arita M."/>
            <person name="Imose N."/>
            <person name="Musashino K."/>
            <person name="Yuuki H."/>
            <person name="Oshima A."/>
            <person name="Sasaki N."/>
            <person name="Aotsuka S."/>
            <person name="Yoshikawa Y."/>
            <person name="Matsunawa H."/>
            <person name="Ichihara T."/>
            <person name="Shiohata N."/>
            <person name="Sano S."/>
            <person name="Moriya S."/>
            <person name="Momiyama H."/>
            <person name="Satoh N."/>
            <person name="Takami S."/>
            <person name="Terashima Y."/>
            <person name="Suzuki O."/>
            <person name="Nakagawa S."/>
            <person name="Senoh A."/>
            <person name="Mizoguchi H."/>
            <person name="Goto Y."/>
            <person name="Shimizu F."/>
            <person name="Wakebe H."/>
            <person name="Hishigaki H."/>
            <person name="Watanabe T."/>
            <person name="Sugiyama A."/>
            <person name="Takemoto M."/>
            <person name="Kawakami B."/>
            <person name="Yamazaki M."/>
            <person name="Watanabe K."/>
            <person name="Kumagai A."/>
            <person name="Itakura S."/>
            <person name="Fukuzumi Y."/>
            <person name="Fujimori Y."/>
            <person name="Komiyama M."/>
            <person name="Tashiro H."/>
            <person name="Tanigami A."/>
            <person name="Fujiwara T."/>
            <person name="Ono T."/>
            <person name="Yamada K."/>
            <person name="Fujii Y."/>
            <person name="Ozaki K."/>
            <person name="Hirao M."/>
            <person name="Ohmori Y."/>
            <person name="Kawabata A."/>
            <person name="Hikiji T."/>
            <person name="Kobatake N."/>
            <person name="Inagaki H."/>
            <person name="Ikema Y."/>
            <person name="Okamoto S."/>
            <person name="Okitani R."/>
            <person name="Kawakami T."/>
            <person name="Noguchi S."/>
            <person name="Itoh T."/>
            <person name="Shigeta K."/>
            <person name="Senba T."/>
            <person name="Matsumura K."/>
            <person name="Nakajima Y."/>
            <person name="Mizuno T."/>
            <person name="Morinaga M."/>
            <person name="Sasaki M."/>
            <person name="Togashi T."/>
            <person name="Oyama M."/>
            <person name="Hata H."/>
            <person name="Watanabe M."/>
            <person name="Komatsu T."/>
            <person name="Mizushima-Sugano J."/>
            <person name="Satoh T."/>
            <person name="Shirai Y."/>
            <person name="Takahashi Y."/>
            <person name="Nakagawa K."/>
            <person name="Okumura K."/>
            <person name="Nagase T."/>
            <person name="Nomura N."/>
            <person name="Kikuchi H."/>
            <person name="Masuho Y."/>
            <person name="Yamashita R."/>
            <person name="Nakai K."/>
            <person name="Yada T."/>
            <person name="Nakamura Y."/>
            <person name="Ohara O."/>
            <person name="Isogai T."/>
            <person name="Sugano S."/>
        </authorList>
    </citation>
    <scope>NUCLEOTIDE SEQUENCE [LARGE SCALE MRNA] (ISOFORM 2)</scope>
    <source>
        <tissue>Testis</tissue>
    </source>
</reference>
<reference key="2">
    <citation type="journal article" date="1999" name="Nature">
        <title>The DNA sequence of human chromosome 22.</title>
        <authorList>
            <person name="Dunham I."/>
            <person name="Hunt A.R."/>
            <person name="Collins J.E."/>
            <person name="Bruskiewich R."/>
            <person name="Beare D.M."/>
            <person name="Clamp M."/>
            <person name="Smink L.J."/>
            <person name="Ainscough R."/>
            <person name="Almeida J.P."/>
            <person name="Babbage A.K."/>
            <person name="Bagguley C."/>
            <person name="Bailey J."/>
            <person name="Barlow K.F."/>
            <person name="Bates K.N."/>
            <person name="Beasley O.P."/>
            <person name="Bird C.P."/>
            <person name="Blakey S.E."/>
            <person name="Bridgeman A.M."/>
            <person name="Buck D."/>
            <person name="Burgess J."/>
            <person name="Burrill W.D."/>
            <person name="Burton J."/>
            <person name="Carder C."/>
            <person name="Carter N.P."/>
            <person name="Chen Y."/>
            <person name="Clark G."/>
            <person name="Clegg S.M."/>
            <person name="Cobley V.E."/>
            <person name="Cole C.G."/>
            <person name="Collier R.E."/>
            <person name="Connor R."/>
            <person name="Conroy D."/>
            <person name="Corby N.R."/>
            <person name="Coville G.J."/>
            <person name="Cox A.V."/>
            <person name="Davis J."/>
            <person name="Dawson E."/>
            <person name="Dhami P.D."/>
            <person name="Dockree C."/>
            <person name="Dodsworth S.J."/>
            <person name="Durbin R.M."/>
            <person name="Ellington A.G."/>
            <person name="Evans K.L."/>
            <person name="Fey J.M."/>
            <person name="Fleming K."/>
            <person name="French L."/>
            <person name="Garner A.A."/>
            <person name="Gilbert J.G.R."/>
            <person name="Goward M.E."/>
            <person name="Grafham D.V."/>
            <person name="Griffiths M.N.D."/>
            <person name="Hall C."/>
            <person name="Hall R.E."/>
            <person name="Hall-Tamlyn G."/>
            <person name="Heathcott R.W."/>
            <person name="Ho S."/>
            <person name="Holmes S."/>
            <person name="Hunt S.E."/>
            <person name="Jones M.C."/>
            <person name="Kershaw J."/>
            <person name="Kimberley A.M."/>
            <person name="King A."/>
            <person name="Laird G.K."/>
            <person name="Langford C.F."/>
            <person name="Leversha M.A."/>
            <person name="Lloyd C."/>
            <person name="Lloyd D.M."/>
            <person name="Martyn I.D."/>
            <person name="Mashreghi-Mohammadi M."/>
            <person name="Matthews L.H."/>
            <person name="Mccann O.T."/>
            <person name="Mcclay J."/>
            <person name="Mclaren S."/>
            <person name="McMurray A.A."/>
            <person name="Milne S.A."/>
            <person name="Mortimore B.J."/>
            <person name="Odell C.N."/>
            <person name="Pavitt R."/>
            <person name="Pearce A.V."/>
            <person name="Pearson D."/>
            <person name="Phillimore B.J.C.T."/>
            <person name="Phillips S.H."/>
            <person name="Plumb R.W."/>
            <person name="Ramsay H."/>
            <person name="Ramsey Y."/>
            <person name="Rogers L."/>
            <person name="Ross M.T."/>
            <person name="Scott C.E."/>
            <person name="Sehra H.K."/>
            <person name="Skuce C.D."/>
            <person name="Smalley S."/>
            <person name="Smith M.L."/>
            <person name="Soderlund C."/>
            <person name="Spragon L."/>
            <person name="Steward C.A."/>
            <person name="Sulston J.E."/>
            <person name="Swann R.M."/>
            <person name="Vaudin M."/>
            <person name="Wall M."/>
            <person name="Wallis J.M."/>
            <person name="Whiteley M.N."/>
            <person name="Willey D.L."/>
            <person name="Williams L."/>
            <person name="Williams S.A."/>
            <person name="Williamson H."/>
            <person name="Wilmer T.E."/>
            <person name="Wilming L."/>
            <person name="Wright C.L."/>
            <person name="Hubbard T."/>
            <person name="Bentley D.R."/>
            <person name="Beck S."/>
            <person name="Rogers J."/>
            <person name="Shimizu N."/>
            <person name="Minoshima S."/>
            <person name="Kawasaki K."/>
            <person name="Sasaki T."/>
            <person name="Asakawa S."/>
            <person name="Kudoh J."/>
            <person name="Shintani A."/>
            <person name="Shibuya K."/>
            <person name="Yoshizaki Y."/>
            <person name="Aoki N."/>
            <person name="Mitsuyama S."/>
            <person name="Roe B.A."/>
            <person name="Chen F."/>
            <person name="Chu L."/>
            <person name="Crabtree J."/>
            <person name="Deschamps S."/>
            <person name="Do A."/>
            <person name="Do T."/>
            <person name="Dorman A."/>
            <person name="Fang F."/>
            <person name="Fu Y."/>
            <person name="Hu P."/>
            <person name="Hua A."/>
            <person name="Kenton S."/>
            <person name="Lai H."/>
            <person name="Lao H.I."/>
            <person name="Lewis J."/>
            <person name="Lewis S."/>
            <person name="Lin S.-P."/>
            <person name="Loh P."/>
            <person name="Malaj E."/>
            <person name="Nguyen T."/>
            <person name="Pan H."/>
            <person name="Phan S."/>
            <person name="Qi S."/>
            <person name="Qian Y."/>
            <person name="Ray L."/>
            <person name="Ren Q."/>
            <person name="Shaull S."/>
            <person name="Sloan D."/>
            <person name="Song L."/>
            <person name="Wang Q."/>
            <person name="Wang Y."/>
            <person name="Wang Z."/>
            <person name="White J."/>
            <person name="Willingham D."/>
            <person name="Wu H."/>
            <person name="Yao Z."/>
            <person name="Zhan M."/>
            <person name="Zhang G."/>
            <person name="Chissoe S."/>
            <person name="Murray J."/>
            <person name="Miller N."/>
            <person name="Minx P."/>
            <person name="Fulton R."/>
            <person name="Johnson D."/>
            <person name="Bemis G."/>
            <person name="Bentley D."/>
            <person name="Bradshaw H."/>
            <person name="Bourne S."/>
            <person name="Cordes M."/>
            <person name="Du Z."/>
            <person name="Fulton L."/>
            <person name="Goela D."/>
            <person name="Graves T."/>
            <person name="Hawkins J."/>
            <person name="Hinds K."/>
            <person name="Kemp K."/>
            <person name="Latreille P."/>
            <person name="Layman D."/>
            <person name="Ozersky P."/>
            <person name="Rohlfing T."/>
            <person name="Scheet P."/>
            <person name="Walker C."/>
            <person name="Wamsley A."/>
            <person name="Wohldmann P."/>
            <person name="Pepin K."/>
            <person name="Nelson J."/>
            <person name="Korf I."/>
            <person name="Bedell J.A."/>
            <person name="Hillier L.W."/>
            <person name="Mardis E."/>
            <person name="Waterston R."/>
            <person name="Wilson R."/>
            <person name="Emanuel B.S."/>
            <person name="Shaikh T."/>
            <person name="Kurahashi H."/>
            <person name="Saitta S."/>
            <person name="Budarf M.L."/>
            <person name="McDermid H.E."/>
            <person name="Johnson A."/>
            <person name="Wong A.C.C."/>
            <person name="Morrow B.E."/>
            <person name="Edelmann L."/>
            <person name="Kim U.J."/>
            <person name="Shizuya H."/>
            <person name="Simon M.I."/>
            <person name="Dumanski J.P."/>
            <person name="Peyrard M."/>
            <person name="Kedra D."/>
            <person name="Seroussi E."/>
            <person name="Fransson I."/>
            <person name="Tapia I."/>
            <person name="Bruder C.E."/>
            <person name="O'Brien K.P."/>
            <person name="Wilkinson P."/>
            <person name="Bodenteich A."/>
            <person name="Hartman K."/>
            <person name="Hu X."/>
            <person name="Khan A.S."/>
            <person name="Lane L."/>
            <person name="Tilahun Y."/>
            <person name="Wright H."/>
        </authorList>
    </citation>
    <scope>NUCLEOTIDE SEQUENCE [LARGE SCALE GENOMIC DNA]</scope>
</reference>
<reference key="3">
    <citation type="journal article" date="2008" name="Proc. Natl. Acad. Sci. U.S.A.">
        <title>A quantitative atlas of mitotic phosphorylation.</title>
        <authorList>
            <person name="Dephoure N."/>
            <person name="Zhou C."/>
            <person name="Villen J."/>
            <person name="Beausoleil S.A."/>
            <person name="Bakalarski C.E."/>
            <person name="Elledge S.J."/>
            <person name="Gygi S.P."/>
        </authorList>
    </citation>
    <scope>PHOSPHORYLATION [LARGE SCALE ANALYSIS] AT TYR-343; SER-348 AND SER-349</scope>
    <scope>IDENTIFICATION BY MASS SPECTROMETRY [LARGE SCALE ANALYSIS]</scope>
    <source>
        <tissue>Cervix carcinoma</tissue>
    </source>
</reference>
<accession>F5H4B4</accession>
<accession>B0QY52</accession>
<accession>B7Z7C6</accession>
<accession>Q5TG08</accession>
<feature type="chain" id="PRO_0000419264" description="Protein FAM227A">
    <location>
        <begin position="1"/>
        <end position="570"/>
    </location>
</feature>
<feature type="region of interest" description="Disordered" evidence="1">
    <location>
        <begin position="87"/>
        <end position="112"/>
    </location>
</feature>
<feature type="region of interest" description="Disordered" evidence="1">
    <location>
        <begin position="336"/>
        <end position="374"/>
    </location>
</feature>
<feature type="region of interest" description="Disordered" evidence="1">
    <location>
        <begin position="519"/>
        <end position="570"/>
    </location>
</feature>
<feature type="compositionally biased region" description="Basic and acidic residues" evidence="1">
    <location>
        <begin position="87"/>
        <end position="99"/>
    </location>
</feature>
<feature type="compositionally biased region" description="Polar residues" evidence="1">
    <location>
        <begin position="345"/>
        <end position="362"/>
    </location>
</feature>
<feature type="compositionally biased region" description="Basic and acidic residues" evidence="1">
    <location>
        <begin position="363"/>
        <end position="374"/>
    </location>
</feature>
<feature type="compositionally biased region" description="Basic and acidic residues" evidence="1">
    <location>
        <begin position="540"/>
        <end position="562"/>
    </location>
</feature>
<feature type="modified residue" description="Phosphotyrosine" evidence="4">
    <location>
        <position position="343"/>
    </location>
</feature>
<feature type="modified residue" description="Phosphoserine" evidence="4">
    <location>
        <position position="348"/>
    </location>
</feature>
<feature type="modified residue" description="Phosphoserine" evidence="4">
    <location>
        <position position="349"/>
    </location>
</feature>
<feature type="splice variant" id="VSP_044139" description="In isoform 2." evidence="2">
    <location>
        <begin position="1"/>
        <end position="93"/>
    </location>
</feature>
<feature type="splice variant" id="VSP_044140" description="In isoform 2." evidence="2">
    <original>SPEDK</original>
    <variation>MLFSW</variation>
    <location>
        <begin position="94"/>
        <end position="98"/>
    </location>
</feature>
<feature type="sequence conflict" description="In Ref. 1; BAH13562." evidence="3" ref="1">
    <original>V</original>
    <variation>A</variation>
    <location>
        <position position="391"/>
    </location>
</feature>
<feature type="sequence conflict" description="In Ref. 1; BAH13562." evidence="3" ref="1">
    <original>A</original>
    <variation>T</variation>
    <location>
        <position position="410"/>
    </location>
</feature>
<keyword id="KW-0025">Alternative splicing</keyword>
<keyword id="KW-0597">Phosphoprotein</keyword>
<keyword id="KW-1267">Proteomics identification</keyword>
<keyword id="KW-1185">Reference proteome</keyword>